<reference key="1">
    <citation type="journal article" date="2004" name="Nature">
        <title>Genome evolution in yeasts.</title>
        <authorList>
            <person name="Dujon B."/>
            <person name="Sherman D."/>
            <person name="Fischer G."/>
            <person name="Durrens P."/>
            <person name="Casaregola S."/>
            <person name="Lafontaine I."/>
            <person name="de Montigny J."/>
            <person name="Marck C."/>
            <person name="Neuveglise C."/>
            <person name="Talla E."/>
            <person name="Goffard N."/>
            <person name="Frangeul L."/>
            <person name="Aigle M."/>
            <person name="Anthouard V."/>
            <person name="Babour A."/>
            <person name="Barbe V."/>
            <person name="Barnay S."/>
            <person name="Blanchin S."/>
            <person name="Beckerich J.-M."/>
            <person name="Beyne E."/>
            <person name="Bleykasten C."/>
            <person name="Boisrame A."/>
            <person name="Boyer J."/>
            <person name="Cattolico L."/>
            <person name="Confanioleri F."/>
            <person name="de Daruvar A."/>
            <person name="Despons L."/>
            <person name="Fabre E."/>
            <person name="Fairhead C."/>
            <person name="Ferry-Dumazet H."/>
            <person name="Groppi A."/>
            <person name="Hantraye F."/>
            <person name="Hennequin C."/>
            <person name="Jauniaux N."/>
            <person name="Joyet P."/>
            <person name="Kachouri R."/>
            <person name="Kerrest A."/>
            <person name="Koszul R."/>
            <person name="Lemaire M."/>
            <person name="Lesur I."/>
            <person name="Ma L."/>
            <person name="Muller H."/>
            <person name="Nicaud J.-M."/>
            <person name="Nikolski M."/>
            <person name="Oztas S."/>
            <person name="Ozier-Kalogeropoulos O."/>
            <person name="Pellenz S."/>
            <person name="Potier S."/>
            <person name="Richard G.-F."/>
            <person name="Straub M.-L."/>
            <person name="Suleau A."/>
            <person name="Swennen D."/>
            <person name="Tekaia F."/>
            <person name="Wesolowski-Louvel M."/>
            <person name="Westhof E."/>
            <person name="Wirth B."/>
            <person name="Zeniou-Meyer M."/>
            <person name="Zivanovic Y."/>
            <person name="Bolotin-Fukuhara M."/>
            <person name="Thierry A."/>
            <person name="Bouchier C."/>
            <person name="Caudron B."/>
            <person name="Scarpelli C."/>
            <person name="Gaillardin C."/>
            <person name="Weissenbach J."/>
            <person name="Wincker P."/>
            <person name="Souciet J.-L."/>
        </authorList>
    </citation>
    <scope>NUCLEOTIDE SEQUENCE [LARGE SCALE GENOMIC DNA]</scope>
    <source>
        <strain>ATCC 8585 / CBS 2359 / DSM 70799 / NBRC 1267 / NRRL Y-1140 / WM37</strain>
    </source>
</reference>
<keyword id="KW-0963">Cytoplasm</keyword>
<keyword id="KW-0227">DNA damage</keyword>
<keyword id="KW-0234">DNA repair</keyword>
<keyword id="KW-0469">Meiosis</keyword>
<keyword id="KW-0539">Nucleus</keyword>
<keyword id="KW-1185">Reference proteome</keyword>
<comment type="function">
    <text evidence="1">Involved in chromosome segregation during meiosis. Promotes efficient recombinational repair and functions in the protection of the genome from spontaneous and induced DNA damage like mutations and gross chromosomal rearrangements (GCRs) (By similarity).</text>
</comment>
<comment type="subcellular location">
    <subcellularLocation>
        <location evidence="1">Cytoplasm</location>
    </subcellularLocation>
    <subcellularLocation>
        <location evidence="1">Nucleus</location>
    </subcellularLocation>
</comment>
<comment type="similarity">
    <text evidence="2">Belongs to the CSM2 family.</text>
</comment>
<organism>
    <name type="scientific">Kluyveromyces lactis (strain ATCC 8585 / CBS 2359 / DSM 70799 / NBRC 1267 / NRRL Y-1140 / WM37)</name>
    <name type="common">Yeast</name>
    <name type="synonym">Candida sphaerica</name>
    <dbReference type="NCBI Taxonomy" id="284590"/>
    <lineage>
        <taxon>Eukaryota</taxon>
        <taxon>Fungi</taxon>
        <taxon>Dikarya</taxon>
        <taxon>Ascomycota</taxon>
        <taxon>Saccharomycotina</taxon>
        <taxon>Saccharomycetes</taxon>
        <taxon>Saccharomycetales</taxon>
        <taxon>Saccharomycetaceae</taxon>
        <taxon>Kluyveromyces</taxon>
    </lineage>
</organism>
<proteinExistence type="inferred from homology"/>
<name>CSM2_KLULA</name>
<gene>
    <name type="primary">CSM2</name>
    <name type="ordered locus">KLLA0F04653g</name>
</gene>
<accession>Q6CL99</accession>
<protein>
    <recommendedName>
        <fullName>Chromosome segregation in meiosis protein 2</fullName>
    </recommendedName>
</protein>
<feature type="chain" id="PRO_0000280684" description="Chromosome segregation in meiosis protein 2">
    <location>
        <begin position="1"/>
        <end position="213"/>
    </location>
</feature>
<evidence type="ECO:0000250" key="1"/>
<evidence type="ECO:0000305" key="2"/>
<dbReference type="EMBL" id="CR382126">
    <property type="protein sequence ID" value="CAG97998.1"/>
    <property type="molecule type" value="Genomic_DNA"/>
</dbReference>
<dbReference type="RefSeq" id="XP_455290.1">
    <property type="nucleotide sequence ID" value="XM_455290.1"/>
</dbReference>
<dbReference type="SMR" id="Q6CL99"/>
<dbReference type="FunCoup" id="Q6CL99">
    <property type="interactions" value="29"/>
</dbReference>
<dbReference type="STRING" id="284590.Q6CL99"/>
<dbReference type="PaxDb" id="284590-Q6CL99"/>
<dbReference type="KEGG" id="kla:KLLA0_F04653g"/>
<dbReference type="eggNOG" id="ENOG502S2QF">
    <property type="taxonomic scope" value="Eukaryota"/>
</dbReference>
<dbReference type="HOGENOM" id="CLU_1235013_0_0_1"/>
<dbReference type="InParanoid" id="Q6CL99"/>
<dbReference type="OMA" id="WDLITAW"/>
<dbReference type="Proteomes" id="UP000000598">
    <property type="component" value="Chromosome F"/>
</dbReference>
<dbReference type="GO" id="GO:0005737">
    <property type="term" value="C:cytoplasm"/>
    <property type="evidence" value="ECO:0007669"/>
    <property type="project" value="UniProtKB-SubCell"/>
</dbReference>
<dbReference type="GO" id="GO:0005634">
    <property type="term" value="C:nucleus"/>
    <property type="evidence" value="ECO:0007669"/>
    <property type="project" value="UniProtKB-SubCell"/>
</dbReference>
<dbReference type="GO" id="GO:0097196">
    <property type="term" value="C:Shu complex"/>
    <property type="evidence" value="ECO:0007669"/>
    <property type="project" value="InterPro"/>
</dbReference>
<dbReference type="GO" id="GO:0051321">
    <property type="term" value="P:meiotic cell cycle"/>
    <property type="evidence" value="ECO:0007669"/>
    <property type="project" value="UniProtKB-KW"/>
</dbReference>
<dbReference type="GO" id="GO:0000725">
    <property type="term" value="P:recombinational repair"/>
    <property type="evidence" value="ECO:0007669"/>
    <property type="project" value="InterPro"/>
</dbReference>
<dbReference type="Gene3D" id="3.40.50.300">
    <property type="entry name" value="P-loop containing nucleotide triphosphate hydrolases"/>
    <property type="match status" value="1"/>
</dbReference>
<dbReference type="InterPro" id="IPR031783">
    <property type="entry name" value="Csm2"/>
</dbReference>
<dbReference type="InterPro" id="IPR027417">
    <property type="entry name" value="P-loop_NTPase"/>
</dbReference>
<dbReference type="Pfam" id="PF16834">
    <property type="entry name" value="CSM2"/>
    <property type="match status" value="1"/>
</dbReference>
<sequence>MKIDIGVDNKCGDFVTYMKDEAFNSQLHYISAISSFPISKMMELLPLSGNETIYESVNVLSSVDLSDLNRCIRSLYQRIIFSPLPKQSDANTDDSNNSNNANMQMETGKIKTDRHWICIEGIQTMFQYSQLKDPVEAHASLNDTMLRLRLLQNKCPSIEILFLLPPHEAPEFIQSLQEHDISRNNIPHRRQGKRFKRDNTGILIGDYIWKYYI</sequence>